<evidence type="ECO:0000250" key="1"/>
<evidence type="ECO:0000255" key="2"/>
<evidence type="ECO:0000303" key="3">
    <source>
    </source>
</evidence>
<evidence type="ECO:0000305" key="4"/>
<evidence type="ECO:0000305" key="5">
    <source>
    </source>
</evidence>
<evidence type="ECO:0000312" key="6">
    <source>
        <dbReference type="Araport" id="AT1G26130"/>
    </source>
</evidence>
<evidence type="ECO:0000312" key="7">
    <source>
        <dbReference type="EMBL" id="AAG50692.1"/>
    </source>
</evidence>
<sequence length="1184" mass="133793">MATVSGRRRKRKIQLSKLFTLTGAKACFKPDHSKIGRSGFSRVVFCNQPDSPEAESRNYCDNYVRTTKYTLATFLPKSLFEQFRRVANFYFLVVGILSFTPLAPYTAVSAIVPLTFVILATMFKEGVEDWRRKQQDIEVNNRKVRVHRGNGNFDLREWKTLRVGDILKVEKNEFFPADLVLLSSSYEDAVCYVETMNLDGETNLKLKQGLEVTLSLREELNFRDFEAFIKCEDPNANLYSFVGTMDLKGEKYPLSPQQLLLRGSKLRNTDYIYGVVIFTGPDTKVVQNSTDPPSKRSMIERKMDKIIYLMFLMVFSLAFFGSVLFGIWTRDDFQNGVMERWYLKPDDSSIFFDPKRAPMAAIYHFLTALMLNSYFIPISLYVSIEIVKVLQSIFINQDIHMYYEEADKPAHARTSNLNEELGQVGTILSDKTGTLTCNSMEFIKCSIAGTAYGRGVTEVEMAMDKRKGSALVNQSNGNSTEDAVAAEPAVKGFNFRDERIMDGNWVTETHADVIQKFFQLLAVCHTVIPEVDEDTGKISYEAESPDEAAFVIAARELGFEFFTRTQTTISVRELDLVTGERVERLYSVLNVLEFSSSKKRMSVIVQDQDGKLLLLCKGADSVMFERLSESGRKYEKETRDHVNEYADAGLRTLILAYRELDENEYEVFTERISEAKNSVSADREALIDEVTEKIEKNLVLLGATAVEDKLQNGVPDCINKLAQAGIKIWVLTGDKMETAINIGFACSLLRRDMKQIIINLETPEIQQLEKSGEKDAIAALKENVLHQITSGKAQLKASGGNAKAFALIIDGKSLAYALEEDMKGIFLELAIGCASVICCRSSPKQKALVTRLVKTGSGQTTLAIGDGANDVGMLQEADIGVGISGVEGMQAVMSSDIAIAQFRYLERLLLVHGHWCYRRISKMICYFFYKNITFGFTLFLYEAYTSFSATPAYNDWYLSLYSVFFTSLPVICLGIFDQDVSAPFCLKFPVLYQEGVQNLLFSWRRILSWMFHGFCSAIIIFFLCKTSLESQAFNHEGKTAGRDILGGTMYTCVVWVVSLQMVLTISYFTLIQHVVVWGSVVIWYLFLMVYGSLPIRMSTDAYMVFLEALAPAPSYWITTLFVVLSTMMPYFIFSAIQMRFFPMSHGTVQLLRYEDQCSNSGNFEMGRQGSVRPTLVMRSHQPES</sequence>
<protein>
    <recommendedName>
        <fullName evidence="3">Probable phospholipid-transporting ATPase 12</fullName>
        <shortName evidence="3">AtALA12</shortName>
        <ecNumber evidence="5">7.6.2.1</ecNumber>
    </recommendedName>
    <alternativeName>
        <fullName evidence="3">Aminophospholipid flippase 12</fullName>
    </alternativeName>
</protein>
<comment type="function">
    <text evidence="5">Involved in transport of phospholipids.</text>
</comment>
<comment type="catalytic activity">
    <reaction evidence="5">
        <text>ATP + H2O + phospholipidSide 1 = ADP + phosphate + phospholipidSide 2.</text>
        <dbReference type="EC" id="7.6.2.1"/>
    </reaction>
</comment>
<comment type="subcellular location">
    <subcellularLocation>
        <location evidence="2">Membrane</location>
        <topology evidence="2">Multi-pass membrane protein</topology>
    </subcellularLocation>
</comment>
<comment type="alternative products">
    <event type="alternative splicing"/>
    <isoform>
        <id>P57792-1</id>
        <name>1</name>
        <sequence type="displayed"/>
    </isoform>
    <text evidence="4">A number of isoforms are produced. According to EST sequences.</text>
</comment>
<comment type="similarity">
    <text evidence="4">Belongs to the cation transport ATPase (P-type) (TC 3.A.3) family. Type IV subfamily.</text>
</comment>
<comment type="sequence caution" evidence="4">
    <conflict type="erroneous gene model prediction">
        <sequence resource="EMBL-CDS" id="AAG50529"/>
    </conflict>
</comment>
<reference key="1">
    <citation type="journal article" date="2000" name="Nature">
        <title>Sequence and analysis of chromosome 1 of the plant Arabidopsis thaliana.</title>
        <authorList>
            <person name="Theologis A."/>
            <person name="Ecker J.R."/>
            <person name="Palm C.J."/>
            <person name="Federspiel N.A."/>
            <person name="Kaul S."/>
            <person name="White O."/>
            <person name="Alonso J."/>
            <person name="Altafi H."/>
            <person name="Araujo R."/>
            <person name="Bowman C.L."/>
            <person name="Brooks S.Y."/>
            <person name="Buehler E."/>
            <person name="Chan A."/>
            <person name="Chao Q."/>
            <person name="Chen H."/>
            <person name="Cheuk R.F."/>
            <person name="Chin C.W."/>
            <person name="Chung M.K."/>
            <person name="Conn L."/>
            <person name="Conway A.B."/>
            <person name="Conway A.R."/>
            <person name="Creasy T.H."/>
            <person name="Dewar K."/>
            <person name="Dunn P."/>
            <person name="Etgu P."/>
            <person name="Feldblyum T.V."/>
            <person name="Feng J.-D."/>
            <person name="Fong B."/>
            <person name="Fujii C.Y."/>
            <person name="Gill J.E."/>
            <person name="Goldsmith A.D."/>
            <person name="Haas B."/>
            <person name="Hansen N.F."/>
            <person name="Hughes B."/>
            <person name="Huizar L."/>
            <person name="Hunter J.L."/>
            <person name="Jenkins J."/>
            <person name="Johnson-Hopson C."/>
            <person name="Khan S."/>
            <person name="Khaykin E."/>
            <person name="Kim C.J."/>
            <person name="Koo H.L."/>
            <person name="Kremenetskaia I."/>
            <person name="Kurtz D.B."/>
            <person name="Kwan A."/>
            <person name="Lam B."/>
            <person name="Langin-Hooper S."/>
            <person name="Lee A."/>
            <person name="Lee J.M."/>
            <person name="Lenz C.A."/>
            <person name="Li J.H."/>
            <person name="Li Y.-P."/>
            <person name="Lin X."/>
            <person name="Liu S.X."/>
            <person name="Liu Z.A."/>
            <person name="Luros J.S."/>
            <person name="Maiti R."/>
            <person name="Marziali A."/>
            <person name="Militscher J."/>
            <person name="Miranda M."/>
            <person name="Nguyen M."/>
            <person name="Nierman W.C."/>
            <person name="Osborne B.I."/>
            <person name="Pai G."/>
            <person name="Peterson J."/>
            <person name="Pham P.K."/>
            <person name="Rizzo M."/>
            <person name="Rooney T."/>
            <person name="Rowley D."/>
            <person name="Sakano H."/>
            <person name="Salzberg S.L."/>
            <person name="Schwartz J.R."/>
            <person name="Shinn P."/>
            <person name="Southwick A.M."/>
            <person name="Sun H."/>
            <person name="Tallon L.J."/>
            <person name="Tambunga G."/>
            <person name="Toriumi M.J."/>
            <person name="Town C.D."/>
            <person name="Utterback T."/>
            <person name="Van Aken S."/>
            <person name="Vaysberg M."/>
            <person name="Vysotskaia V.S."/>
            <person name="Walker M."/>
            <person name="Wu D."/>
            <person name="Yu G."/>
            <person name="Fraser C.M."/>
            <person name="Venter J.C."/>
            <person name="Davis R.W."/>
        </authorList>
    </citation>
    <scope>NUCLEOTIDE SEQUENCE [LARGE SCALE GENOMIC DNA]</scope>
    <source>
        <strain>cv. Columbia</strain>
    </source>
</reference>
<reference key="2">
    <citation type="journal article" date="2017" name="Plant J.">
        <title>Araport11: a complete reannotation of the Arabidopsis thaliana reference genome.</title>
        <authorList>
            <person name="Cheng C.Y."/>
            <person name="Krishnakumar V."/>
            <person name="Chan A.P."/>
            <person name="Thibaud-Nissen F."/>
            <person name="Schobel S."/>
            <person name="Town C.D."/>
        </authorList>
    </citation>
    <scope>GENOME REANNOTATION</scope>
    <source>
        <strain>cv. Columbia</strain>
    </source>
</reference>
<reference key="3">
    <citation type="journal article" date="2001" name="Plant Physiol.">
        <title>Inventory of the superfamily of P-type ion pumps in Arabidopsis.</title>
        <authorList>
            <person name="Axelsen K.B."/>
            <person name="Palmgren M.G."/>
        </authorList>
    </citation>
    <scope>GENE FAMILY</scope>
    <scope>NOMENCLATURE</scope>
</reference>
<gene>
    <name evidence="3" type="primary">ALA12</name>
    <name evidence="6" type="ordered locus">At1g26130</name>
    <name type="ORF">F14G11.10</name>
    <name evidence="7" type="ORF">F28B23.19</name>
</gene>
<proteinExistence type="inferred from homology"/>
<name>ALA12_ARATH</name>
<accession>P57792</accession>
<keyword id="KW-0025">Alternative splicing</keyword>
<keyword id="KW-0067">ATP-binding</keyword>
<keyword id="KW-0460">Magnesium</keyword>
<keyword id="KW-0472">Membrane</keyword>
<keyword id="KW-0479">Metal-binding</keyword>
<keyword id="KW-0547">Nucleotide-binding</keyword>
<keyword id="KW-1185">Reference proteome</keyword>
<keyword id="KW-1278">Translocase</keyword>
<keyword id="KW-0812">Transmembrane</keyword>
<keyword id="KW-1133">Transmembrane helix</keyword>
<dbReference type="EC" id="7.6.2.1" evidence="5"/>
<dbReference type="EMBL" id="AC079829">
    <property type="protein sequence ID" value="AAG50692.1"/>
    <property type="molecule type" value="Genomic_DNA"/>
</dbReference>
<dbReference type="EMBL" id="AC084221">
    <property type="protein sequence ID" value="AAG50529.1"/>
    <property type="status" value="ALT_SEQ"/>
    <property type="molecule type" value="Genomic_DNA"/>
</dbReference>
<dbReference type="EMBL" id="CP002684">
    <property type="protein sequence ID" value="AEE30652.1"/>
    <property type="molecule type" value="Genomic_DNA"/>
</dbReference>
<dbReference type="PIR" id="D86387">
    <property type="entry name" value="D86387"/>
</dbReference>
<dbReference type="RefSeq" id="NP_001319082.1">
    <molecule id="P57792-1"/>
    <property type="nucleotide sequence ID" value="NM_001332685.1"/>
</dbReference>
<dbReference type="SMR" id="P57792"/>
<dbReference type="FunCoup" id="P57792">
    <property type="interactions" value="920"/>
</dbReference>
<dbReference type="STRING" id="3702.P57792"/>
<dbReference type="GlyGen" id="P57792">
    <property type="glycosylation" value="1 site"/>
</dbReference>
<dbReference type="iPTMnet" id="P57792"/>
<dbReference type="PaxDb" id="3702-AT1G26130.2"/>
<dbReference type="ProteomicsDB" id="244899">
    <molecule id="P57792-1"/>
</dbReference>
<dbReference type="EnsemblPlants" id="AT1G26130.1">
    <molecule id="P57792-1"/>
    <property type="protein sequence ID" value="AT1G26130.1"/>
    <property type="gene ID" value="AT1G26130"/>
</dbReference>
<dbReference type="GeneID" id="839154"/>
<dbReference type="Gramene" id="AT1G26130.1">
    <molecule id="P57792-1"/>
    <property type="protein sequence ID" value="AT1G26130.1"/>
    <property type="gene ID" value="AT1G26130"/>
</dbReference>
<dbReference type="KEGG" id="ath:AT1G26130"/>
<dbReference type="Araport" id="AT1G26130"/>
<dbReference type="TAIR" id="AT1G26130"/>
<dbReference type="eggNOG" id="KOG0206">
    <property type="taxonomic scope" value="Eukaryota"/>
</dbReference>
<dbReference type="HOGENOM" id="CLU_000846_5_2_1"/>
<dbReference type="InParanoid" id="P57792"/>
<dbReference type="OMA" id="TANEMDF"/>
<dbReference type="PhylomeDB" id="P57792"/>
<dbReference type="BioCyc" id="ARA:AT1G26130-MONOMER"/>
<dbReference type="PRO" id="PR:P57792"/>
<dbReference type="Proteomes" id="UP000006548">
    <property type="component" value="Chromosome 1"/>
</dbReference>
<dbReference type="ExpressionAtlas" id="P57792">
    <property type="expression patterns" value="baseline and differential"/>
</dbReference>
<dbReference type="GO" id="GO:0016020">
    <property type="term" value="C:membrane"/>
    <property type="evidence" value="ECO:0007669"/>
    <property type="project" value="UniProtKB-SubCell"/>
</dbReference>
<dbReference type="GO" id="GO:0005524">
    <property type="term" value="F:ATP binding"/>
    <property type="evidence" value="ECO:0007669"/>
    <property type="project" value="UniProtKB-KW"/>
</dbReference>
<dbReference type="GO" id="GO:0016887">
    <property type="term" value="F:ATP hydrolysis activity"/>
    <property type="evidence" value="ECO:0007669"/>
    <property type="project" value="InterPro"/>
</dbReference>
<dbReference type="GO" id="GO:0140326">
    <property type="term" value="F:ATPase-coupled intramembrane lipid transporter activity"/>
    <property type="evidence" value="ECO:0007669"/>
    <property type="project" value="UniProtKB-EC"/>
</dbReference>
<dbReference type="GO" id="GO:0000287">
    <property type="term" value="F:magnesium ion binding"/>
    <property type="evidence" value="ECO:0007669"/>
    <property type="project" value="InterPro"/>
</dbReference>
<dbReference type="GO" id="GO:0015914">
    <property type="term" value="P:phospholipid transport"/>
    <property type="evidence" value="ECO:0007669"/>
    <property type="project" value="InterPro"/>
</dbReference>
<dbReference type="CDD" id="cd02073">
    <property type="entry name" value="P-type_ATPase_APLT_Dnf-like"/>
    <property type="match status" value="1"/>
</dbReference>
<dbReference type="FunFam" id="2.70.150.10:FF:000023">
    <property type="entry name" value="Phospholipid-transporting ATPase"/>
    <property type="match status" value="1"/>
</dbReference>
<dbReference type="FunFam" id="3.40.1110.10:FF:000042">
    <property type="entry name" value="Phospholipid-transporting ATPase"/>
    <property type="match status" value="1"/>
</dbReference>
<dbReference type="FunFam" id="3.40.50.1000:FF:000014">
    <property type="entry name" value="Phospholipid-transporting ATPase"/>
    <property type="match status" value="1"/>
</dbReference>
<dbReference type="Gene3D" id="3.40.1110.10">
    <property type="entry name" value="Calcium-transporting ATPase, cytoplasmic domain N"/>
    <property type="match status" value="1"/>
</dbReference>
<dbReference type="Gene3D" id="2.70.150.10">
    <property type="entry name" value="Calcium-transporting ATPase, cytoplasmic transduction domain A"/>
    <property type="match status" value="1"/>
</dbReference>
<dbReference type="Gene3D" id="3.40.50.1000">
    <property type="entry name" value="HAD superfamily/HAD-like"/>
    <property type="match status" value="1"/>
</dbReference>
<dbReference type="InterPro" id="IPR023299">
    <property type="entry name" value="ATPase_P-typ_cyto_dom_N"/>
</dbReference>
<dbReference type="InterPro" id="IPR018303">
    <property type="entry name" value="ATPase_P-typ_P_site"/>
</dbReference>
<dbReference type="InterPro" id="IPR023298">
    <property type="entry name" value="ATPase_P-typ_TM_dom_sf"/>
</dbReference>
<dbReference type="InterPro" id="IPR008250">
    <property type="entry name" value="ATPase_P-typ_transduc_dom_A_sf"/>
</dbReference>
<dbReference type="InterPro" id="IPR036412">
    <property type="entry name" value="HAD-like_sf"/>
</dbReference>
<dbReference type="InterPro" id="IPR023214">
    <property type="entry name" value="HAD_sf"/>
</dbReference>
<dbReference type="InterPro" id="IPR006539">
    <property type="entry name" value="P-type_ATPase_IV"/>
</dbReference>
<dbReference type="InterPro" id="IPR032631">
    <property type="entry name" value="P-type_ATPase_N"/>
</dbReference>
<dbReference type="InterPro" id="IPR001757">
    <property type="entry name" value="P_typ_ATPase"/>
</dbReference>
<dbReference type="InterPro" id="IPR032630">
    <property type="entry name" value="P_typ_ATPase_c"/>
</dbReference>
<dbReference type="InterPro" id="IPR044492">
    <property type="entry name" value="P_typ_ATPase_HD_dom"/>
</dbReference>
<dbReference type="NCBIfam" id="TIGR01652">
    <property type="entry name" value="ATPase-Plipid"/>
    <property type="match status" value="1"/>
</dbReference>
<dbReference type="NCBIfam" id="TIGR01494">
    <property type="entry name" value="ATPase_P-type"/>
    <property type="match status" value="1"/>
</dbReference>
<dbReference type="PANTHER" id="PTHR24092:SF166">
    <property type="entry name" value="PHOSPHOLIPID-TRANSPORTING ATPASE 12-RELATED"/>
    <property type="match status" value="1"/>
</dbReference>
<dbReference type="PANTHER" id="PTHR24092">
    <property type="entry name" value="PROBABLE PHOSPHOLIPID-TRANSPORTING ATPASE"/>
    <property type="match status" value="1"/>
</dbReference>
<dbReference type="Pfam" id="PF13246">
    <property type="entry name" value="Cation_ATPase"/>
    <property type="match status" value="1"/>
</dbReference>
<dbReference type="Pfam" id="PF16212">
    <property type="entry name" value="PhoLip_ATPase_C"/>
    <property type="match status" value="1"/>
</dbReference>
<dbReference type="Pfam" id="PF16209">
    <property type="entry name" value="PhoLip_ATPase_N"/>
    <property type="match status" value="1"/>
</dbReference>
<dbReference type="PRINTS" id="PR00119">
    <property type="entry name" value="CATATPASE"/>
</dbReference>
<dbReference type="SFLD" id="SFLDS00003">
    <property type="entry name" value="Haloacid_Dehalogenase"/>
    <property type="match status" value="1"/>
</dbReference>
<dbReference type="SFLD" id="SFLDF00027">
    <property type="entry name" value="p-type_atpase"/>
    <property type="match status" value="1"/>
</dbReference>
<dbReference type="SUPFAM" id="SSF81653">
    <property type="entry name" value="Calcium ATPase, transduction domain A"/>
    <property type="match status" value="1"/>
</dbReference>
<dbReference type="SUPFAM" id="SSF81665">
    <property type="entry name" value="Calcium ATPase, transmembrane domain M"/>
    <property type="match status" value="1"/>
</dbReference>
<dbReference type="SUPFAM" id="SSF56784">
    <property type="entry name" value="HAD-like"/>
    <property type="match status" value="1"/>
</dbReference>
<dbReference type="SUPFAM" id="SSF81660">
    <property type="entry name" value="Metal cation-transporting ATPase, ATP-binding domain N"/>
    <property type="match status" value="1"/>
</dbReference>
<dbReference type="PROSITE" id="PS00154">
    <property type="entry name" value="ATPASE_E1_E2"/>
    <property type="match status" value="1"/>
</dbReference>
<feature type="chain" id="PRO_0000046396" description="Probable phospholipid-transporting ATPase 12">
    <location>
        <begin position="1"/>
        <end position="1184"/>
    </location>
</feature>
<feature type="topological domain" description="Cytoplasmic" evidence="2">
    <location>
        <begin position="1"/>
        <end position="75"/>
    </location>
</feature>
<feature type="transmembrane region" description="Helical" evidence="2">
    <location>
        <begin position="76"/>
        <end position="97"/>
    </location>
</feature>
<feature type="topological domain" description="Extracellular" evidence="2">
    <location>
        <begin position="98"/>
        <end position="101"/>
    </location>
</feature>
<feature type="transmembrane region" description="Helical" evidence="2">
    <location>
        <begin position="102"/>
        <end position="124"/>
    </location>
</feature>
<feature type="topological domain" description="Cytoplasmic" evidence="2">
    <location>
        <begin position="125"/>
        <end position="306"/>
    </location>
</feature>
<feature type="transmembrane region" description="Helical" evidence="2">
    <location>
        <begin position="307"/>
        <end position="328"/>
    </location>
</feature>
<feature type="topological domain" description="Extracellular" evidence="2">
    <location>
        <begin position="329"/>
        <end position="364"/>
    </location>
</feature>
<feature type="transmembrane region" description="Helical" evidence="2">
    <location>
        <begin position="365"/>
        <end position="382"/>
    </location>
</feature>
<feature type="topological domain" description="Cytoplasmic" evidence="2">
    <location>
        <begin position="383"/>
        <end position="921"/>
    </location>
</feature>
<feature type="transmembrane region" description="Helical" evidence="2">
    <location>
        <begin position="922"/>
        <end position="941"/>
    </location>
</feature>
<feature type="topological domain" description="Extracellular" evidence="2">
    <location>
        <begin position="942"/>
        <end position="955"/>
    </location>
</feature>
<feature type="transmembrane region" description="Helical" evidence="2">
    <location>
        <begin position="956"/>
        <end position="975"/>
    </location>
</feature>
<feature type="topological domain" description="Cytoplasmic" evidence="2">
    <location>
        <begin position="976"/>
        <end position="1005"/>
    </location>
</feature>
<feature type="transmembrane region" description="Helical" evidence="2">
    <location>
        <begin position="1006"/>
        <end position="1028"/>
    </location>
</feature>
<feature type="topological domain" description="Extracellular" evidence="2">
    <location>
        <begin position="1029"/>
        <end position="1041"/>
    </location>
</feature>
<feature type="transmembrane region" description="Helical" evidence="2">
    <location>
        <begin position="1042"/>
        <end position="1064"/>
    </location>
</feature>
<feature type="topological domain" description="Cytoplasmic" evidence="2">
    <location>
        <begin position="1065"/>
        <end position="1070"/>
    </location>
</feature>
<feature type="transmembrane region" description="Helical" evidence="2">
    <location>
        <begin position="1071"/>
        <end position="1091"/>
    </location>
</feature>
<feature type="topological domain" description="Extracellular" evidence="2">
    <location>
        <begin position="1092"/>
        <end position="1108"/>
    </location>
</feature>
<feature type="transmembrane region" description="Helical" evidence="2">
    <location>
        <begin position="1109"/>
        <end position="1133"/>
    </location>
</feature>
<feature type="topological domain" description="Cytoplasmic" evidence="2">
    <location>
        <begin position="1134"/>
        <end position="1184"/>
    </location>
</feature>
<feature type="active site" description="4-aspartylphosphate intermediate" evidence="1">
    <location>
        <position position="430"/>
    </location>
</feature>
<feature type="binding site" evidence="1">
    <location>
        <position position="866"/>
    </location>
    <ligand>
        <name>Mg(2+)</name>
        <dbReference type="ChEBI" id="CHEBI:18420"/>
    </ligand>
</feature>
<feature type="binding site" evidence="1">
    <location>
        <position position="870"/>
    </location>
    <ligand>
        <name>Mg(2+)</name>
        <dbReference type="ChEBI" id="CHEBI:18420"/>
    </ligand>
</feature>
<organism>
    <name type="scientific">Arabidopsis thaliana</name>
    <name type="common">Mouse-ear cress</name>
    <dbReference type="NCBI Taxonomy" id="3702"/>
    <lineage>
        <taxon>Eukaryota</taxon>
        <taxon>Viridiplantae</taxon>
        <taxon>Streptophyta</taxon>
        <taxon>Embryophyta</taxon>
        <taxon>Tracheophyta</taxon>
        <taxon>Spermatophyta</taxon>
        <taxon>Magnoliopsida</taxon>
        <taxon>eudicotyledons</taxon>
        <taxon>Gunneridae</taxon>
        <taxon>Pentapetalae</taxon>
        <taxon>rosids</taxon>
        <taxon>malvids</taxon>
        <taxon>Brassicales</taxon>
        <taxon>Brassicaceae</taxon>
        <taxon>Camelineae</taxon>
        <taxon>Arabidopsis</taxon>
    </lineage>
</organism>